<proteinExistence type="inferred from homology"/>
<dbReference type="EMBL" id="CP000395">
    <property type="protein sequence ID" value="ABH01664.1"/>
    <property type="molecule type" value="Genomic_DNA"/>
</dbReference>
<dbReference type="EMBL" id="CP002933">
    <property type="protein sequence ID" value="AEL69621.1"/>
    <property type="molecule type" value="Genomic_DNA"/>
</dbReference>
<dbReference type="RefSeq" id="WP_006433846.1">
    <property type="nucleotide sequence ID" value="NZ_CP160066.1"/>
</dbReference>
<dbReference type="SMR" id="Q0SNB4"/>
<dbReference type="STRING" id="29518.BLA32_02340"/>
<dbReference type="GeneID" id="77265231"/>
<dbReference type="KEGG" id="baf:BAPKO_0408"/>
<dbReference type="KEGG" id="bafz:BafPKo_0395"/>
<dbReference type="PATRIC" id="fig|390236.22.peg.388"/>
<dbReference type="eggNOG" id="COG0080">
    <property type="taxonomic scope" value="Bacteria"/>
</dbReference>
<dbReference type="HOGENOM" id="CLU_074237_2_1_12"/>
<dbReference type="OrthoDB" id="9802408at2"/>
<dbReference type="Proteomes" id="UP000005216">
    <property type="component" value="Chromosome"/>
</dbReference>
<dbReference type="GO" id="GO:0022625">
    <property type="term" value="C:cytosolic large ribosomal subunit"/>
    <property type="evidence" value="ECO:0007669"/>
    <property type="project" value="TreeGrafter"/>
</dbReference>
<dbReference type="GO" id="GO:0070180">
    <property type="term" value="F:large ribosomal subunit rRNA binding"/>
    <property type="evidence" value="ECO:0007669"/>
    <property type="project" value="UniProtKB-UniRule"/>
</dbReference>
<dbReference type="GO" id="GO:0003735">
    <property type="term" value="F:structural constituent of ribosome"/>
    <property type="evidence" value="ECO:0007669"/>
    <property type="project" value="InterPro"/>
</dbReference>
<dbReference type="GO" id="GO:0006412">
    <property type="term" value="P:translation"/>
    <property type="evidence" value="ECO:0007669"/>
    <property type="project" value="UniProtKB-UniRule"/>
</dbReference>
<dbReference type="CDD" id="cd00349">
    <property type="entry name" value="Ribosomal_L11"/>
    <property type="match status" value="1"/>
</dbReference>
<dbReference type="FunFam" id="1.10.10.250:FF:000001">
    <property type="entry name" value="50S ribosomal protein L11"/>
    <property type="match status" value="1"/>
</dbReference>
<dbReference type="FunFam" id="3.30.1550.10:FF:000006">
    <property type="entry name" value="50S ribosomal protein L11"/>
    <property type="match status" value="1"/>
</dbReference>
<dbReference type="Gene3D" id="1.10.10.250">
    <property type="entry name" value="Ribosomal protein L11, C-terminal domain"/>
    <property type="match status" value="1"/>
</dbReference>
<dbReference type="Gene3D" id="3.30.1550.10">
    <property type="entry name" value="Ribosomal protein L11/L12, N-terminal domain"/>
    <property type="match status" value="1"/>
</dbReference>
<dbReference type="HAMAP" id="MF_00736">
    <property type="entry name" value="Ribosomal_uL11"/>
    <property type="match status" value="1"/>
</dbReference>
<dbReference type="InterPro" id="IPR000911">
    <property type="entry name" value="Ribosomal_uL11"/>
</dbReference>
<dbReference type="InterPro" id="IPR006519">
    <property type="entry name" value="Ribosomal_uL11_bac-typ"/>
</dbReference>
<dbReference type="InterPro" id="IPR020783">
    <property type="entry name" value="Ribosomal_uL11_C"/>
</dbReference>
<dbReference type="InterPro" id="IPR036769">
    <property type="entry name" value="Ribosomal_uL11_C_sf"/>
</dbReference>
<dbReference type="InterPro" id="IPR020785">
    <property type="entry name" value="Ribosomal_uL11_CS"/>
</dbReference>
<dbReference type="InterPro" id="IPR020784">
    <property type="entry name" value="Ribosomal_uL11_N"/>
</dbReference>
<dbReference type="InterPro" id="IPR036796">
    <property type="entry name" value="Ribosomal_uL11_N_sf"/>
</dbReference>
<dbReference type="NCBIfam" id="TIGR01632">
    <property type="entry name" value="L11_bact"/>
    <property type="match status" value="1"/>
</dbReference>
<dbReference type="PANTHER" id="PTHR11661">
    <property type="entry name" value="60S RIBOSOMAL PROTEIN L12"/>
    <property type="match status" value="1"/>
</dbReference>
<dbReference type="PANTHER" id="PTHR11661:SF1">
    <property type="entry name" value="LARGE RIBOSOMAL SUBUNIT PROTEIN UL11M"/>
    <property type="match status" value="1"/>
</dbReference>
<dbReference type="Pfam" id="PF00298">
    <property type="entry name" value="Ribosomal_L11"/>
    <property type="match status" value="1"/>
</dbReference>
<dbReference type="Pfam" id="PF03946">
    <property type="entry name" value="Ribosomal_L11_N"/>
    <property type="match status" value="1"/>
</dbReference>
<dbReference type="SMART" id="SM00649">
    <property type="entry name" value="RL11"/>
    <property type="match status" value="1"/>
</dbReference>
<dbReference type="SUPFAM" id="SSF54747">
    <property type="entry name" value="Ribosomal L11/L12e N-terminal domain"/>
    <property type="match status" value="1"/>
</dbReference>
<dbReference type="SUPFAM" id="SSF46906">
    <property type="entry name" value="Ribosomal protein L11, C-terminal domain"/>
    <property type="match status" value="1"/>
</dbReference>
<dbReference type="PROSITE" id="PS00359">
    <property type="entry name" value="RIBOSOMAL_L11"/>
    <property type="match status" value="1"/>
</dbReference>
<sequence length="143" mass="15236">MAKKKAISWIKLQVPAAQAAPGAKIGQALGPHGVSGPQFVKEFNERTAKMEPGIVVPVIITVYSDKSFSFIVKTPPASILIKKAIGIESGSKKSNTDKVGTISKEKLMEIVRIKMPDLNAKSESAAFKIISGSARSMGVEVEK</sequence>
<comment type="function">
    <text evidence="1">Forms part of the ribosomal stalk which helps the ribosome interact with GTP-bound translation factors.</text>
</comment>
<comment type="subunit">
    <text evidence="1">Part of the ribosomal stalk of the 50S ribosomal subunit. Interacts with L10 and the large rRNA to form the base of the stalk. L10 forms an elongated spine to which L12 dimers bind in a sequential fashion forming a multimeric L10(L12)X complex.</text>
</comment>
<comment type="PTM">
    <text evidence="1">One or more lysine residues are methylated.</text>
</comment>
<comment type="similarity">
    <text evidence="1">Belongs to the universal ribosomal protein uL11 family.</text>
</comment>
<name>RL11_BORAP</name>
<feature type="chain" id="PRO_1000046145" description="Large ribosomal subunit protein uL11">
    <location>
        <begin position="1"/>
        <end position="143"/>
    </location>
</feature>
<reference key="1">
    <citation type="journal article" date="2006" name="BMC Genomics">
        <title>Comparative genome analysis: selection pressure on the Borrelia vls cassettes is essential for infectivity.</title>
        <authorList>
            <person name="Gloeckner G."/>
            <person name="Schulte-Spechtel U."/>
            <person name="Schilhabel M."/>
            <person name="Felder M."/>
            <person name="Suehnel J."/>
            <person name="Wilske B."/>
            <person name="Platzer M."/>
        </authorList>
    </citation>
    <scope>NUCLEOTIDE SEQUENCE [LARGE SCALE GENOMIC DNA]</scope>
    <source>
        <strain>PKo</strain>
    </source>
</reference>
<reference key="2">
    <citation type="journal article" date="2011" name="J. Bacteriol.">
        <title>Whole-genome sequences of two Borrelia afzelii and two Borrelia garinii Lyme disease agent isolates.</title>
        <authorList>
            <person name="Casjens S.R."/>
            <person name="Mongodin E.F."/>
            <person name="Qiu W.G."/>
            <person name="Dunn J.J."/>
            <person name="Luft B.J."/>
            <person name="Fraser-Liggett C.M."/>
            <person name="Schutzer S.E."/>
        </authorList>
    </citation>
    <scope>NUCLEOTIDE SEQUENCE [LARGE SCALE GENOMIC DNA]</scope>
    <source>
        <strain>PKo</strain>
    </source>
</reference>
<protein>
    <recommendedName>
        <fullName evidence="1">Large ribosomal subunit protein uL11</fullName>
    </recommendedName>
    <alternativeName>
        <fullName evidence="2">50S ribosomal protein L11</fullName>
    </alternativeName>
</protein>
<gene>
    <name evidence="1" type="primary">rplK</name>
    <name type="ordered locus">BAPKO_0408</name>
    <name type="ordered locus">BafPKo_0395</name>
</gene>
<accession>Q0SNB4</accession>
<accession>G0IS40</accession>
<evidence type="ECO:0000255" key="1">
    <source>
        <dbReference type="HAMAP-Rule" id="MF_00736"/>
    </source>
</evidence>
<evidence type="ECO:0000305" key="2"/>
<organism>
    <name type="scientific">Borreliella afzelii (strain PKo)</name>
    <name type="common">Borrelia afzelii</name>
    <dbReference type="NCBI Taxonomy" id="390236"/>
    <lineage>
        <taxon>Bacteria</taxon>
        <taxon>Pseudomonadati</taxon>
        <taxon>Spirochaetota</taxon>
        <taxon>Spirochaetia</taxon>
        <taxon>Spirochaetales</taxon>
        <taxon>Borreliaceae</taxon>
        <taxon>Borreliella</taxon>
    </lineage>
</organism>
<keyword id="KW-0488">Methylation</keyword>
<keyword id="KW-0687">Ribonucleoprotein</keyword>
<keyword id="KW-0689">Ribosomal protein</keyword>
<keyword id="KW-0694">RNA-binding</keyword>
<keyword id="KW-0699">rRNA-binding</keyword>